<protein>
    <recommendedName>
        <fullName evidence="1">UPF0210 protein LEUM_1180</fullName>
    </recommendedName>
</protein>
<evidence type="ECO:0000255" key="1">
    <source>
        <dbReference type="HAMAP-Rule" id="MF_01221"/>
    </source>
</evidence>
<keyword id="KW-1185">Reference proteome</keyword>
<reference key="1">
    <citation type="journal article" date="2006" name="Proc. Natl. Acad. Sci. U.S.A.">
        <title>Comparative genomics of the lactic acid bacteria.</title>
        <authorList>
            <person name="Makarova K.S."/>
            <person name="Slesarev A."/>
            <person name="Wolf Y.I."/>
            <person name="Sorokin A."/>
            <person name="Mirkin B."/>
            <person name="Koonin E.V."/>
            <person name="Pavlov A."/>
            <person name="Pavlova N."/>
            <person name="Karamychev V."/>
            <person name="Polouchine N."/>
            <person name="Shakhova V."/>
            <person name="Grigoriev I."/>
            <person name="Lou Y."/>
            <person name="Rohksar D."/>
            <person name="Lucas S."/>
            <person name="Huang K."/>
            <person name="Goodstein D.M."/>
            <person name="Hawkins T."/>
            <person name="Plengvidhya V."/>
            <person name="Welker D."/>
            <person name="Hughes J."/>
            <person name="Goh Y."/>
            <person name="Benson A."/>
            <person name="Baldwin K."/>
            <person name="Lee J.-H."/>
            <person name="Diaz-Muniz I."/>
            <person name="Dosti B."/>
            <person name="Smeianov V."/>
            <person name="Wechter W."/>
            <person name="Barabote R."/>
            <person name="Lorca G."/>
            <person name="Altermann E."/>
            <person name="Barrangou R."/>
            <person name="Ganesan B."/>
            <person name="Xie Y."/>
            <person name="Rawsthorne H."/>
            <person name="Tamir D."/>
            <person name="Parker C."/>
            <person name="Breidt F."/>
            <person name="Broadbent J.R."/>
            <person name="Hutkins R."/>
            <person name="O'Sullivan D."/>
            <person name="Steele J."/>
            <person name="Unlu G."/>
            <person name="Saier M.H. Jr."/>
            <person name="Klaenhammer T."/>
            <person name="Richardson P."/>
            <person name="Kozyavkin S."/>
            <person name="Weimer B.C."/>
            <person name="Mills D.A."/>
        </authorList>
    </citation>
    <scope>NUCLEOTIDE SEQUENCE [LARGE SCALE GENOMIC DNA]</scope>
    <source>
        <strain>ATCC 8293 / DSM 20343 / BCRC 11652 / CCM 1803 / JCM 6124 / NCDO 523 / NBRC 100496 / NCIMB 8023 / NCTC 12954 / NRRL B-1118 / 37Y</strain>
    </source>
</reference>
<organism>
    <name type="scientific">Leuconostoc mesenteroides subsp. mesenteroides (strain ATCC 8293 / DSM 20343 / BCRC 11652 / CCM 1803 / JCM 6124 / NCDO 523 / NBRC 100496 / NCIMB 8023 / NCTC 12954 / NRRL B-1118 / 37Y)</name>
    <dbReference type="NCBI Taxonomy" id="203120"/>
    <lineage>
        <taxon>Bacteria</taxon>
        <taxon>Bacillati</taxon>
        <taxon>Bacillota</taxon>
        <taxon>Bacilli</taxon>
        <taxon>Lactobacillales</taxon>
        <taxon>Lactobacillaceae</taxon>
        <taxon>Leuconostoc</taxon>
    </lineage>
</organism>
<sequence>METKQIQETINMVEEEHLDIRTVTMGISLLDTIAGDPQQTAKNIYKKVTTYAKDLIKVAEQIEREYGIPITNKRISVTPIALIAGHATPDDMLYYAHALDDAAKAVGVDFIGGYSALVQKGFANGDLALIKSLPRALTETDLVMSSVNIGSTKAGINLDAIKLMGETVKGISEKSDTANAKLVIFANAVEDNPFMAGAFHGVSEADVVINVGVSGPGVVKRALEKVKGESIQVVAETVKKTAFKITRVGQMVGALAAERLGVEFGIVDLSLAPTPARGDSVAEVLEEIGLEQVGTHGTTAALMLLNDAVKKGGVMASQRVGGLSGAFIPVSEDAGMIDAAKEGTLTLSKLEAMTAVCSVGLDMIAIPGDTSATTISAMIADEAAIGVQNNKTTAVRILPTLGTKVGDMVDYGGLLGTAPVMPVVEKSSADFINRGGHIPAPIHSFKN</sequence>
<feature type="chain" id="PRO_1000066759" description="UPF0210 protein LEUM_1180">
    <location>
        <begin position="1"/>
        <end position="447"/>
    </location>
</feature>
<accession>Q03WZ4</accession>
<comment type="subunit">
    <text evidence="1">Homodimer.</text>
</comment>
<comment type="similarity">
    <text evidence="1">Belongs to the UPF0210 family.</text>
</comment>
<gene>
    <name type="ordered locus">LEUM_1180</name>
</gene>
<name>Y1180_LEUMM</name>
<dbReference type="EMBL" id="CP000414">
    <property type="protein sequence ID" value="ABJ62278.1"/>
    <property type="molecule type" value="Genomic_DNA"/>
</dbReference>
<dbReference type="RefSeq" id="WP_002814654.1">
    <property type="nucleotide sequence ID" value="NC_008531.1"/>
</dbReference>
<dbReference type="SMR" id="Q03WZ4"/>
<dbReference type="EnsemblBacteria" id="ABJ62278">
    <property type="protein sequence ID" value="ABJ62278"/>
    <property type="gene ID" value="LEUM_1180"/>
</dbReference>
<dbReference type="GeneID" id="29575792"/>
<dbReference type="KEGG" id="lme:LEUM_1180"/>
<dbReference type="eggNOG" id="COG2848">
    <property type="taxonomic scope" value="Bacteria"/>
</dbReference>
<dbReference type="HOGENOM" id="CLU_048704_0_0_9"/>
<dbReference type="Proteomes" id="UP000000362">
    <property type="component" value="Chromosome"/>
</dbReference>
<dbReference type="CDD" id="cd08025">
    <property type="entry name" value="RNR_PFL_like_DUF711"/>
    <property type="match status" value="1"/>
</dbReference>
<dbReference type="Gene3D" id="3.20.70.20">
    <property type="match status" value="1"/>
</dbReference>
<dbReference type="HAMAP" id="MF_01221">
    <property type="entry name" value="UPF0210"/>
    <property type="match status" value="1"/>
</dbReference>
<dbReference type="InterPro" id="IPR007841">
    <property type="entry name" value="UPF0210"/>
</dbReference>
<dbReference type="NCBIfam" id="NF003700">
    <property type="entry name" value="PRK05313.1"/>
    <property type="match status" value="1"/>
</dbReference>
<dbReference type="PANTHER" id="PTHR37560:SF1">
    <property type="entry name" value="UPF0210 PROTEIN MJ1665"/>
    <property type="match status" value="1"/>
</dbReference>
<dbReference type="PANTHER" id="PTHR37560">
    <property type="entry name" value="UPF0210 PROTEIN SPR0218"/>
    <property type="match status" value="1"/>
</dbReference>
<dbReference type="Pfam" id="PF05167">
    <property type="entry name" value="DUF711"/>
    <property type="match status" value="1"/>
</dbReference>
<dbReference type="SUPFAM" id="SSF51998">
    <property type="entry name" value="PFL-like glycyl radical enzymes"/>
    <property type="match status" value="1"/>
</dbReference>
<proteinExistence type="inferred from homology"/>